<sequence>MADDSLLLNFSLGDNNIIQPETKLKGGTWRDRLSAKKIAKHHAKGPRTAGDEDSAPRAPRNPNRIEVPSSRPTKRQRTDGGDSGKQQSHGHPHSNQPRQFISSLFTKNPEPQKAEEVKEEGHVENAKPTNAPLIDGLDTFTNLGLSPNLAAHLLTKLELKAPTAIQKASISQLLKEEGDAFIQAETGSGKTLAYLLPLVQRIMALSKPGAQTDATGQPIVHRDSGLFAIVLAPTRELCKQISVVLENLLRCAHWIVAGTVIGGEKKKSEKARLRKGLNILVATPGRLADHLDNTQALDVSNVRWLVLDEGDRLMELGFEEEIQGIVKKLDARQRPSRIPGIPARRTTILCSATLKMSVQKLGEISLKDAVHIKADPEDEDEKARRSKAEESAYRVPAQLKQSYAVVAAKLRLVTLTAFFKRTFMRKGSVMKAIIFVSCADSVDFHFEVFTRKQVKEDGGEPSDTDKSEEKPPSSPHGTIAPATAFSNPSNPVTLFRLHGSLPQNVRTSTLGAFAKNKEASVLICTDVASRGLDLPNVDLVVEYDPAFSAEDHLHRIGRTARVGRDGRALIFLQPGCEENYVEVLKRGYRDGGKALTRADANEILKRGFGGNVESGNKDWETKATDWQCEVERWALENPEYLEMARRAFQSHIRAYATHIAAERSMFNIKELHLGHLAKAFALRDRPSKINVPGLRQGKEETKKDFKAERNSAAGKKRKAGGADLADDIPSANNTATAAQKMRAKMKEHMAGANEFNLA</sequence>
<dbReference type="EC" id="3.6.4.13"/>
<dbReference type="EMBL" id="AAHF01000003">
    <property type="protein sequence ID" value="EAL91505.1"/>
    <property type="molecule type" value="Genomic_DNA"/>
</dbReference>
<dbReference type="RefSeq" id="XP_753543.1">
    <property type="nucleotide sequence ID" value="XM_748450.1"/>
</dbReference>
<dbReference type="SMR" id="Q4WV71"/>
<dbReference type="FunCoup" id="Q4WV71">
    <property type="interactions" value="745"/>
</dbReference>
<dbReference type="STRING" id="330879.Q4WV71"/>
<dbReference type="EnsemblFungi" id="EAL91505">
    <property type="protein sequence ID" value="EAL91505"/>
    <property type="gene ID" value="AFUA_5G11050"/>
</dbReference>
<dbReference type="GeneID" id="3510905"/>
<dbReference type="KEGG" id="afm:AFUA_5G11050"/>
<dbReference type="VEuPathDB" id="FungiDB:Afu5g11050"/>
<dbReference type="eggNOG" id="KOG0348">
    <property type="taxonomic scope" value="Eukaryota"/>
</dbReference>
<dbReference type="HOGENOM" id="CLU_003041_26_2_1"/>
<dbReference type="InParanoid" id="Q4WV71"/>
<dbReference type="OMA" id="AVHIKAD"/>
<dbReference type="OrthoDB" id="422663at2759"/>
<dbReference type="Proteomes" id="UP000002530">
    <property type="component" value="Chromosome 5"/>
</dbReference>
<dbReference type="GO" id="GO:0005730">
    <property type="term" value="C:nucleolus"/>
    <property type="evidence" value="ECO:0007669"/>
    <property type="project" value="UniProtKB-SubCell"/>
</dbReference>
<dbReference type="GO" id="GO:0005634">
    <property type="term" value="C:nucleus"/>
    <property type="evidence" value="ECO:0000318"/>
    <property type="project" value="GO_Central"/>
</dbReference>
<dbReference type="GO" id="GO:0005524">
    <property type="term" value="F:ATP binding"/>
    <property type="evidence" value="ECO:0007669"/>
    <property type="project" value="UniProtKB-KW"/>
</dbReference>
<dbReference type="GO" id="GO:0016887">
    <property type="term" value="F:ATP hydrolysis activity"/>
    <property type="evidence" value="ECO:0007669"/>
    <property type="project" value="RHEA"/>
</dbReference>
<dbReference type="GO" id="GO:0003723">
    <property type="term" value="F:RNA binding"/>
    <property type="evidence" value="ECO:0007669"/>
    <property type="project" value="UniProtKB-KW"/>
</dbReference>
<dbReference type="GO" id="GO:0003724">
    <property type="term" value="F:RNA helicase activity"/>
    <property type="evidence" value="ECO:0007669"/>
    <property type="project" value="UniProtKB-EC"/>
</dbReference>
<dbReference type="GO" id="GO:0000464">
    <property type="term" value="P:endonucleolytic cleavage in ITS1 upstream of 5.8S rRNA from tricistronic rRNA transcript (SSU-rRNA, 5.8S rRNA, LSU-rRNA)"/>
    <property type="evidence" value="ECO:0007669"/>
    <property type="project" value="EnsemblFungi"/>
</dbReference>
<dbReference type="GO" id="GO:0042254">
    <property type="term" value="P:ribosome biogenesis"/>
    <property type="evidence" value="ECO:0000318"/>
    <property type="project" value="GO_Central"/>
</dbReference>
<dbReference type="CDD" id="cd17949">
    <property type="entry name" value="DEADc_DDX31"/>
    <property type="match status" value="1"/>
</dbReference>
<dbReference type="CDD" id="cd18787">
    <property type="entry name" value="SF2_C_DEAD"/>
    <property type="match status" value="1"/>
</dbReference>
<dbReference type="Gene3D" id="3.40.50.300">
    <property type="entry name" value="P-loop containing nucleotide triphosphate hydrolases"/>
    <property type="match status" value="2"/>
</dbReference>
<dbReference type="InterPro" id="IPR011545">
    <property type="entry name" value="DEAD/DEAH_box_helicase_dom"/>
</dbReference>
<dbReference type="InterPro" id="IPR014001">
    <property type="entry name" value="Helicase_ATP-bd"/>
</dbReference>
<dbReference type="InterPro" id="IPR001650">
    <property type="entry name" value="Helicase_C-like"/>
</dbReference>
<dbReference type="InterPro" id="IPR027417">
    <property type="entry name" value="P-loop_NTPase"/>
</dbReference>
<dbReference type="InterPro" id="IPR025313">
    <property type="entry name" value="SPB4-like_CTE"/>
</dbReference>
<dbReference type="PANTHER" id="PTHR24031">
    <property type="entry name" value="RNA HELICASE"/>
    <property type="match status" value="1"/>
</dbReference>
<dbReference type="Pfam" id="PF13959">
    <property type="entry name" value="CTE_SPB4"/>
    <property type="match status" value="1"/>
</dbReference>
<dbReference type="Pfam" id="PF00270">
    <property type="entry name" value="DEAD"/>
    <property type="match status" value="1"/>
</dbReference>
<dbReference type="Pfam" id="PF00271">
    <property type="entry name" value="Helicase_C"/>
    <property type="match status" value="1"/>
</dbReference>
<dbReference type="SMART" id="SM00487">
    <property type="entry name" value="DEXDc"/>
    <property type="match status" value="1"/>
</dbReference>
<dbReference type="SMART" id="SM01178">
    <property type="entry name" value="DUF4217"/>
    <property type="match status" value="1"/>
</dbReference>
<dbReference type="SMART" id="SM00490">
    <property type="entry name" value="HELICc"/>
    <property type="match status" value="1"/>
</dbReference>
<dbReference type="SUPFAM" id="SSF52540">
    <property type="entry name" value="P-loop containing nucleoside triphosphate hydrolases"/>
    <property type="match status" value="1"/>
</dbReference>
<dbReference type="PROSITE" id="PS51192">
    <property type="entry name" value="HELICASE_ATP_BIND_1"/>
    <property type="match status" value="1"/>
</dbReference>
<dbReference type="PROSITE" id="PS51194">
    <property type="entry name" value="HELICASE_CTER"/>
    <property type="match status" value="1"/>
</dbReference>
<dbReference type="PROSITE" id="PS51195">
    <property type="entry name" value="Q_MOTIF"/>
    <property type="match status" value="1"/>
</dbReference>
<comment type="function">
    <text evidence="1">ATP-binding RNA helicase involved in the biogenesis of 60S ribosomal subunits and is required for the normal formation of 25S and 5.8S rRNAs.</text>
</comment>
<comment type="catalytic activity">
    <reaction>
        <text>ATP + H2O = ADP + phosphate + H(+)</text>
        <dbReference type="Rhea" id="RHEA:13065"/>
        <dbReference type="ChEBI" id="CHEBI:15377"/>
        <dbReference type="ChEBI" id="CHEBI:15378"/>
        <dbReference type="ChEBI" id="CHEBI:30616"/>
        <dbReference type="ChEBI" id="CHEBI:43474"/>
        <dbReference type="ChEBI" id="CHEBI:456216"/>
        <dbReference type="EC" id="3.6.4.13"/>
    </reaction>
</comment>
<comment type="subcellular location">
    <subcellularLocation>
        <location evidence="1">Nucleus</location>
        <location evidence="1">Nucleolus</location>
    </subcellularLocation>
</comment>
<comment type="domain">
    <text>The Q motif is unique to and characteristic of the DEAD box family of RNA helicases and controls ATP binding and hydrolysis.</text>
</comment>
<comment type="miscellaneous">
    <text>Present with 1460 molecules/cell in log phase SD medium.</text>
</comment>
<comment type="similarity">
    <text evidence="5">Belongs to the DEAD box helicase family. DDX31/DBP7 subfamily.</text>
</comment>
<name>DBP7_ASPFU</name>
<protein>
    <recommendedName>
        <fullName>ATP-dependent RNA helicase dbp7</fullName>
        <ecNumber>3.6.4.13</ecNumber>
    </recommendedName>
</protein>
<reference key="1">
    <citation type="journal article" date="2005" name="Nature">
        <title>Genomic sequence of the pathogenic and allergenic filamentous fungus Aspergillus fumigatus.</title>
        <authorList>
            <person name="Nierman W.C."/>
            <person name="Pain A."/>
            <person name="Anderson M.J."/>
            <person name="Wortman J.R."/>
            <person name="Kim H.S."/>
            <person name="Arroyo J."/>
            <person name="Berriman M."/>
            <person name="Abe K."/>
            <person name="Archer D.B."/>
            <person name="Bermejo C."/>
            <person name="Bennett J.W."/>
            <person name="Bowyer P."/>
            <person name="Chen D."/>
            <person name="Collins M."/>
            <person name="Coulsen R."/>
            <person name="Davies R."/>
            <person name="Dyer P.S."/>
            <person name="Farman M.L."/>
            <person name="Fedorova N."/>
            <person name="Fedorova N.D."/>
            <person name="Feldblyum T.V."/>
            <person name="Fischer R."/>
            <person name="Fosker N."/>
            <person name="Fraser A."/>
            <person name="Garcia J.L."/>
            <person name="Garcia M.J."/>
            <person name="Goble A."/>
            <person name="Goldman G.H."/>
            <person name="Gomi K."/>
            <person name="Griffith-Jones S."/>
            <person name="Gwilliam R."/>
            <person name="Haas B.J."/>
            <person name="Haas H."/>
            <person name="Harris D.E."/>
            <person name="Horiuchi H."/>
            <person name="Huang J."/>
            <person name="Humphray S."/>
            <person name="Jimenez J."/>
            <person name="Keller N."/>
            <person name="Khouri H."/>
            <person name="Kitamoto K."/>
            <person name="Kobayashi T."/>
            <person name="Konzack S."/>
            <person name="Kulkarni R."/>
            <person name="Kumagai T."/>
            <person name="Lafton A."/>
            <person name="Latge J.-P."/>
            <person name="Li W."/>
            <person name="Lord A."/>
            <person name="Lu C."/>
            <person name="Majoros W.H."/>
            <person name="May G.S."/>
            <person name="Miller B.L."/>
            <person name="Mohamoud Y."/>
            <person name="Molina M."/>
            <person name="Monod M."/>
            <person name="Mouyna I."/>
            <person name="Mulligan S."/>
            <person name="Murphy L.D."/>
            <person name="O'Neil S."/>
            <person name="Paulsen I."/>
            <person name="Penalva M.A."/>
            <person name="Pertea M."/>
            <person name="Price C."/>
            <person name="Pritchard B.L."/>
            <person name="Quail M.A."/>
            <person name="Rabbinowitsch E."/>
            <person name="Rawlins N."/>
            <person name="Rajandream M.A."/>
            <person name="Reichard U."/>
            <person name="Renauld H."/>
            <person name="Robson G.D."/>
            <person name="Rodriguez de Cordoba S."/>
            <person name="Rodriguez-Pena J.M."/>
            <person name="Ronning C.M."/>
            <person name="Rutter S."/>
            <person name="Salzberg S.L."/>
            <person name="Sanchez M."/>
            <person name="Sanchez-Ferrero J.C."/>
            <person name="Saunders D."/>
            <person name="Seeger K."/>
            <person name="Squares R."/>
            <person name="Squares S."/>
            <person name="Takeuchi M."/>
            <person name="Tekaia F."/>
            <person name="Turner G."/>
            <person name="Vazquez de Aldana C.R."/>
            <person name="Weidman J."/>
            <person name="White O."/>
            <person name="Woodward J.R."/>
            <person name="Yu J.-H."/>
            <person name="Fraser C.M."/>
            <person name="Galagan J.E."/>
            <person name="Asai K."/>
            <person name="Machida M."/>
            <person name="Hall N."/>
            <person name="Barrell B.G."/>
            <person name="Denning D.W."/>
        </authorList>
    </citation>
    <scope>NUCLEOTIDE SEQUENCE [LARGE SCALE GENOMIC DNA]</scope>
    <source>
        <strain>ATCC MYA-4609 / CBS 101355 / FGSC A1100 / Af293</strain>
    </source>
</reference>
<accession>Q4WV71</accession>
<gene>
    <name type="primary">dbp7</name>
    <name type="ORF">AFUA_5G11050</name>
</gene>
<organism>
    <name type="scientific">Aspergillus fumigatus (strain ATCC MYA-4609 / CBS 101355 / FGSC A1100 / Af293)</name>
    <name type="common">Neosartorya fumigata</name>
    <dbReference type="NCBI Taxonomy" id="330879"/>
    <lineage>
        <taxon>Eukaryota</taxon>
        <taxon>Fungi</taxon>
        <taxon>Dikarya</taxon>
        <taxon>Ascomycota</taxon>
        <taxon>Pezizomycotina</taxon>
        <taxon>Eurotiomycetes</taxon>
        <taxon>Eurotiomycetidae</taxon>
        <taxon>Eurotiales</taxon>
        <taxon>Aspergillaceae</taxon>
        <taxon>Aspergillus</taxon>
        <taxon>Aspergillus subgen. Fumigati</taxon>
    </lineage>
</organism>
<proteinExistence type="inferred from homology"/>
<evidence type="ECO:0000250" key="1"/>
<evidence type="ECO:0000255" key="2">
    <source>
        <dbReference type="PROSITE-ProRule" id="PRU00541"/>
    </source>
</evidence>
<evidence type="ECO:0000255" key="3">
    <source>
        <dbReference type="PROSITE-ProRule" id="PRU00542"/>
    </source>
</evidence>
<evidence type="ECO:0000256" key="4">
    <source>
        <dbReference type="SAM" id="MobiDB-lite"/>
    </source>
</evidence>
<evidence type="ECO:0000305" key="5"/>
<keyword id="KW-0067">ATP-binding</keyword>
<keyword id="KW-0347">Helicase</keyword>
<keyword id="KW-0378">Hydrolase</keyword>
<keyword id="KW-0547">Nucleotide-binding</keyword>
<keyword id="KW-0539">Nucleus</keyword>
<keyword id="KW-1185">Reference proteome</keyword>
<keyword id="KW-0690">Ribosome biogenesis</keyword>
<keyword id="KW-0694">RNA-binding</keyword>
<keyword id="KW-0698">rRNA processing</keyword>
<feature type="chain" id="PRO_0000232250" description="ATP-dependent RNA helicase dbp7">
    <location>
        <begin position="1"/>
        <end position="758"/>
    </location>
</feature>
<feature type="domain" description="Helicase ATP-binding" evidence="2">
    <location>
        <begin position="171"/>
        <end position="372"/>
    </location>
</feature>
<feature type="domain" description="Helicase C-terminal" evidence="3">
    <location>
        <begin position="398"/>
        <end position="620"/>
    </location>
</feature>
<feature type="region of interest" description="Disordered" evidence="4">
    <location>
        <begin position="28"/>
        <end position="98"/>
    </location>
</feature>
<feature type="region of interest" description="Disordered" evidence="4">
    <location>
        <begin position="110"/>
        <end position="130"/>
    </location>
</feature>
<feature type="region of interest" description="Disordered" evidence="4">
    <location>
        <begin position="455"/>
        <end position="483"/>
    </location>
</feature>
<feature type="region of interest" description="Disordered" evidence="4">
    <location>
        <begin position="697"/>
        <end position="745"/>
    </location>
</feature>
<feature type="short sequence motif" description="Q motif">
    <location>
        <begin position="138"/>
        <end position="167"/>
    </location>
</feature>
<feature type="short sequence motif" description="DEAD box">
    <location>
        <begin position="308"/>
        <end position="311"/>
    </location>
</feature>
<feature type="compositionally biased region" description="Basic residues" evidence="4">
    <location>
        <begin position="35"/>
        <end position="45"/>
    </location>
</feature>
<feature type="compositionally biased region" description="Polar residues" evidence="4">
    <location>
        <begin position="84"/>
        <end position="98"/>
    </location>
</feature>
<feature type="compositionally biased region" description="Basic and acidic residues" evidence="4">
    <location>
        <begin position="110"/>
        <end position="125"/>
    </location>
</feature>
<feature type="compositionally biased region" description="Basic and acidic residues" evidence="4">
    <location>
        <begin position="455"/>
        <end position="471"/>
    </location>
</feature>
<feature type="compositionally biased region" description="Basic and acidic residues" evidence="4">
    <location>
        <begin position="697"/>
        <end position="709"/>
    </location>
</feature>
<feature type="binding site" evidence="2">
    <location>
        <begin position="184"/>
        <end position="191"/>
    </location>
    <ligand>
        <name>ATP</name>
        <dbReference type="ChEBI" id="CHEBI:30616"/>
    </ligand>
</feature>